<sequence length="898" mass="102738">MPQVDPDLFDRGQFQAELALKASPIAAFKKAIRRARDVLDNRFRSGRDIRRLIEDRAWFVDNILQQAWDQFEWSEDADIALLAVGGYGRGELHPYSDIDLLILLESDDHEVFREPIERFLTLLWDIGLEVGQSVRSVDECAQEGRADLTVITNLMESRTIAGPEHLRQRMLEVTSTQHMWPSKEFFLAKHAEQKKRHHKYNDTEYNLEPNVKGSPGGLRDIQTILWVARRQYGTLNLHALAGEGFLLGSENALLASSQEFLWKVRYALHMLAGRSEDRLLFDYQVRIAGLLGYEDNDAKLAIERFMQKYYRVVMSIAELSDLIIQHFEEVILSDDDGTPQPINSRFQLHDGYIEATNPNVFRRTPFAMLEIFVLMAQHPEIKGVRADTIRLLREHRHLINDDFRNDIRNTSLFIELFKCEIGIHRNLRRMNRYGILGLYLPEFGHIVGQMQHDLFHIYTVDAHTLNLIKHLRKLQYTEVSEKFPLASKIMARLPKPELIYLAGLYHDIGKGRGGDHSELGAVDAQAFGTRHHLPAWDNRLIVWLVSNHLVMSTTAQRKDLSDPQVIHDFAQFVGDEVHLDYLYVLTVADINATNPTLWNSWRASLLRQLYTETKRALRRGLENPVDREEQIRRTQTAALDILVRSGTDPDDVEQLWSALGDDYFLRHTAGDVAWHSDAILQQPADGGPLVLIKETTQREFEGGTQIFIYAPDQHDFFAVTVAAMDQLNLNIHDARIITSSSQFTLDTYIVLDHEGGSIGNNPERIQDIRDGLTEALRNPDDYPTIIKRRVPRQLKHFAFAPQVTIHNDAQRPVTVLELLAPDRPGLLARIGKIFLEFDLSLQNAKIATLGERVEDVFFITDANNQPLSDPQLCSQLQEAIVKQLSVNSEPGGDLRISI</sequence>
<name>GLND_PSESM</name>
<comment type="function">
    <text evidence="1">Modifies, by uridylylation and deuridylylation, the PII regulatory proteins (GlnB and homologs), in response to the nitrogen status of the cell that GlnD senses through the glutamine level. Under low glutamine levels, catalyzes the conversion of the PII proteins and UTP to PII-UMP and PPi, while under higher glutamine levels, GlnD hydrolyzes PII-UMP to PII and UMP (deuridylylation). Thus, controls uridylylation state and activity of the PII proteins, and plays an important role in the regulation of nitrogen assimilation and metabolism.</text>
</comment>
<comment type="catalytic activity">
    <reaction evidence="1">
        <text>[protein-PII]-L-tyrosine + UTP = [protein-PII]-uridylyl-L-tyrosine + diphosphate</text>
        <dbReference type="Rhea" id="RHEA:13673"/>
        <dbReference type="Rhea" id="RHEA-COMP:12147"/>
        <dbReference type="Rhea" id="RHEA-COMP:12148"/>
        <dbReference type="ChEBI" id="CHEBI:33019"/>
        <dbReference type="ChEBI" id="CHEBI:46398"/>
        <dbReference type="ChEBI" id="CHEBI:46858"/>
        <dbReference type="ChEBI" id="CHEBI:90602"/>
        <dbReference type="EC" id="2.7.7.59"/>
    </reaction>
</comment>
<comment type="catalytic activity">
    <reaction evidence="1">
        <text>[protein-PII]-uridylyl-L-tyrosine + H2O = [protein-PII]-L-tyrosine + UMP + H(+)</text>
        <dbReference type="Rhea" id="RHEA:48600"/>
        <dbReference type="Rhea" id="RHEA-COMP:12147"/>
        <dbReference type="Rhea" id="RHEA-COMP:12148"/>
        <dbReference type="ChEBI" id="CHEBI:15377"/>
        <dbReference type="ChEBI" id="CHEBI:15378"/>
        <dbReference type="ChEBI" id="CHEBI:46858"/>
        <dbReference type="ChEBI" id="CHEBI:57865"/>
        <dbReference type="ChEBI" id="CHEBI:90602"/>
    </reaction>
</comment>
<comment type="cofactor">
    <cofactor evidence="1">
        <name>Mg(2+)</name>
        <dbReference type="ChEBI" id="CHEBI:18420"/>
    </cofactor>
</comment>
<comment type="activity regulation">
    <text evidence="1">Uridylyltransferase (UTase) activity is inhibited by glutamine, while glutamine activates uridylyl-removing (UR) activity.</text>
</comment>
<comment type="domain">
    <text evidence="1">Has four distinct domains: an N-terminal nucleotidyltransferase (NT) domain responsible for UTase activity, a central HD domain that encodes UR activity, and two C-terminal ACT domains that seem to have a role in glutamine sensing.</text>
</comment>
<comment type="similarity">
    <text evidence="1">Belongs to the GlnD family.</text>
</comment>
<accession>Q886P5</accession>
<gene>
    <name evidence="1" type="primary">glnD</name>
    <name type="ordered locus">PSPTO_1532</name>
</gene>
<protein>
    <recommendedName>
        <fullName evidence="1">Bifunctional uridylyltransferase/uridylyl-removing enzyme</fullName>
        <shortName evidence="1">UTase/UR</shortName>
    </recommendedName>
    <alternativeName>
        <fullName evidence="1">Bifunctional [protein-PII] modification enzyme</fullName>
    </alternativeName>
    <alternativeName>
        <fullName evidence="1">Bifunctional nitrogen sensor protein</fullName>
    </alternativeName>
    <domain>
        <recommendedName>
            <fullName evidence="1">[Protein-PII] uridylyltransferase</fullName>
            <shortName evidence="1">PII uridylyltransferase</shortName>
            <shortName evidence="1">UTase</shortName>
            <ecNumber evidence="1">2.7.7.59</ecNumber>
        </recommendedName>
    </domain>
    <domain>
        <recommendedName>
            <fullName evidence="1">[Protein-PII]-UMP uridylyl-removing enzyme</fullName>
            <shortName evidence="1">UR</shortName>
            <ecNumber evidence="1">3.1.4.-</ecNumber>
        </recommendedName>
    </domain>
</protein>
<organism>
    <name type="scientific">Pseudomonas syringae pv. tomato (strain ATCC BAA-871 / DC3000)</name>
    <dbReference type="NCBI Taxonomy" id="223283"/>
    <lineage>
        <taxon>Bacteria</taxon>
        <taxon>Pseudomonadati</taxon>
        <taxon>Pseudomonadota</taxon>
        <taxon>Gammaproteobacteria</taxon>
        <taxon>Pseudomonadales</taxon>
        <taxon>Pseudomonadaceae</taxon>
        <taxon>Pseudomonas</taxon>
    </lineage>
</organism>
<feature type="chain" id="PRO_0000192756" description="Bifunctional uridylyltransferase/uridylyl-removing enzyme">
    <location>
        <begin position="1"/>
        <end position="898"/>
    </location>
</feature>
<feature type="domain" description="HD" evidence="2">
    <location>
        <begin position="460"/>
        <end position="582"/>
    </location>
</feature>
<feature type="domain" description="ACT 1" evidence="1">
    <location>
        <begin position="705"/>
        <end position="788"/>
    </location>
</feature>
<feature type="domain" description="ACT 2" evidence="1">
    <location>
        <begin position="815"/>
        <end position="891"/>
    </location>
</feature>
<feature type="region of interest" description="Uridylyltransferase">
    <location>
        <begin position="1"/>
        <end position="341"/>
    </location>
</feature>
<feature type="region of interest" description="Uridylyl-removing">
    <location>
        <begin position="342"/>
        <end position="704"/>
    </location>
</feature>
<dbReference type="EC" id="2.7.7.59" evidence="1"/>
<dbReference type="EC" id="3.1.4.-" evidence="1"/>
<dbReference type="EMBL" id="AE016853">
    <property type="protein sequence ID" value="AAO55052.1"/>
    <property type="molecule type" value="Genomic_DNA"/>
</dbReference>
<dbReference type="RefSeq" id="NP_791357.1">
    <property type="nucleotide sequence ID" value="NC_004578.1"/>
</dbReference>
<dbReference type="RefSeq" id="WP_007245412.1">
    <property type="nucleotide sequence ID" value="NC_004578.1"/>
</dbReference>
<dbReference type="SMR" id="Q886P5"/>
<dbReference type="STRING" id="223283.PSPTO_1532"/>
<dbReference type="KEGG" id="pst:PSPTO_1532"/>
<dbReference type="PATRIC" id="fig|223283.9.peg.1556"/>
<dbReference type="eggNOG" id="COG2844">
    <property type="taxonomic scope" value="Bacteria"/>
</dbReference>
<dbReference type="HOGENOM" id="CLU_012833_0_0_6"/>
<dbReference type="OrthoDB" id="9758038at2"/>
<dbReference type="PhylomeDB" id="Q886P5"/>
<dbReference type="Proteomes" id="UP000002515">
    <property type="component" value="Chromosome"/>
</dbReference>
<dbReference type="GO" id="GO:0008773">
    <property type="term" value="F:[protein-PII] uridylyltransferase activity"/>
    <property type="evidence" value="ECO:0007669"/>
    <property type="project" value="UniProtKB-UniRule"/>
</dbReference>
<dbReference type="GO" id="GO:0008081">
    <property type="term" value="F:phosphoric diester hydrolase activity"/>
    <property type="evidence" value="ECO:0007669"/>
    <property type="project" value="UniProtKB-UniRule"/>
</dbReference>
<dbReference type="GO" id="GO:0006808">
    <property type="term" value="P:regulation of nitrogen utilization"/>
    <property type="evidence" value="ECO:0007669"/>
    <property type="project" value="UniProtKB-UniRule"/>
</dbReference>
<dbReference type="CDD" id="cd04899">
    <property type="entry name" value="ACT_ACR-UUR-like_2"/>
    <property type="match status" value="1"/>
</dbReference>
<dbReference type="CDD" id="cd04900">
    <property type="entry name" value="ACT_UUR-like_1"/>
    <property type="match status" value="1"/>
</dbReference>
<dbReference type="CDD" id="cd00077">
    <property type="entry name" value="HDc"/>
    <property type="match status" value="1"/>
</dbReference>
<dbReference type="CDD" id="cd05401">
    <property type="entry name" value="NT_GlnE_GlnD_like"/>
    <property type="match status" value="1"/>
</dbReference>
<dbReference type="FunFam" id="1.10.3090.10:FF:000005">
    <property type="entry name" value="Bifunctional uridylyltransferase/uridylyl-removing enzyme"/>
    <property type="match status" value="1"/>
</dbReference>
<dbReference type="Gene3D" id="3.30.460.10">
    <property type="entry name" value="Beta Polymerase, domain 2"/>
    <property type="match status" value="1"/>
</dbReference>
<dbReference type="Gene3D" id="1.10.3090.10">
    <property type="entry name" value="cca-adding enzyme, domain 2"/>
    <property type="match status" value="1"/>
</dbReference>
<dbReference type="HAMAP" id="MF_00277">
    <property type="entry name" value="PII_uridylyl_transf"/>
    <property type="match status" value="1"/>
</dbReference>
<dbReference type="InterPro" id="IPR045865">
    <property type="entry name" value="ACT-like_dom_sf"/>
</dbReference>
<dbReference type="InterPro" id="IPR002912">
    <property type="entry name" value="ACT_dom"/>
</dbReference>
<dbReference type="InterPro" id="IPR003607">
    <property type="entry name" value="HD/PDEase_dom"/>
</dbReference>
<dbReference type="InterPro" id="IPR006674">
    <property type="entry name" value="HD_domain"/>
</dbReference>
<dbReference type="InterPro" id="IPR043519">
    <property type="entry name" value="NT_sf"/>
</dbReference>
<dbReference type="InterPro" id="IPR013546">
    <property type="entry name" value="PII_UdlTrfase/GS_AdlTrfase"/>
</dbReference>
<dbReference type="InterPro" id="IPR002934">
    <property type="entry name" value="Polymerase_NTP_transf_dom"/>
</dbReference>
<dbReference type="InterPro" id="IPR010043">
    <property type="entry name" value="UTase/UR"/>
</dbReference>
<dbReference type="NCBIfam" id="NF001366">
    <property type="entry name" value="PRK00275.1"/>
    <property type="match status" value="1"/>
</dbReference>
<dbReference type="NCBIfam" id="TIGR01693">
    <property type="entry name" value="UTase_glnD"/>
    <property type="match status" value="1"/>
</dbReference>
<dbReference type="PANTHER" id="PTHR47320">
    <property type="entry name" value="BIFUNCTIONAL URIDYLYLTRANSFERASE/URIDYLYL-REMOVING ENZYME"/>
    <property type="match status" value="1"/>
</dbReference>
<dbReference type="PANTHER" id="PTHR47320:SF1">
    <property type="entry name" value="BIFUNCTIONAL URIDYLYLTRANSFERASE_URIDYLYL-REMOVING ENZYME"/>
    <property type="match status" value="1"/>
</dbReference>
<dbReference type="Pfam" id="PF01842">
    <property type="entry name" value="ACT"/>
    <property type="match status" value="1"/>
</dbReference>
<dbReference type="Pfam" id="PF08335">
    <property type="entry name" value="GlnD_UR_UTase"/>
    <property type="match status" value="1"/>
</dbReference>
<dbReference type="Pfam" id="PF01966">
    <property type="entry name" value="HD"/>
    <property type="match status" value="1"/>
</dbReference>
<dbReference type="Pfam" id="PF01909">
    <property type="entry name" value="NTP_transf_2"/>
    <property type="match status" value="1"/>
</dbReference>
<dbReference type="PIRSF" id="PIRSF006288">
    <property type="entry name" value="PII_uridyltransf"/>
    <property type="match status" value="1"/>
</dbReference>
<dbReference type="SMART" id="SM00471">
    <property type="entry name" value="HDc"/>
    <property type="match status" value="1"/>
</dbReference>
<dbReference type="SUPFAM" id="SSF55021">
    <property type="entry name" value="ACT-like"/>
    <property type="match status" value="2"/>
</dbReference>
<dbReference type="SUPFAM" id="SSF109604">
    <property type="entry name" value="HD-domain/PDEase-like"/>
    <property type="match status" value="1"/>
</dbReference>
<dbReference type="SUPFAM" id="SSF81301">
    <property type="entry name" value="Nucleotidyltransferase"/>
    <property type="match status" value="1"/>
</dbReference>
<dbReference type="SUPFAM" id="SSF81593">
    <property type="entry name" value="Nucleotidyltransferase substrate binding subunit/domain"/>
    <property type="match status" value="1"/>
</dbReference>
<dbReference type="PROSITE" id="PS51671">
    <property type="entry name" value="ACT"/>
    <property type="match status" value="2"/>
</dbReference>
<dbReference type="PROSITE" id="PS51831">
    <property type="entry name" value="HD"/>
    <property type="match status" value="1"/>
</dbReference>
<proteinExistence type="inferred from homology"/>
<keyword id="KW-0378">Hydrolase</keyword>
<keyword id="KW-0460">Magnesium</keyword>
<keyword id="KW-0511">Multifunctional enzyme</keyword>
<keyword id="KW-0548">Nucleotidyltransferase</keyword>
<keyword id="KW-1185">Reference proteome</keyword>
<keyword id="KW-0677">Repeat</keyword>
<keyword id="KW-0808">Transferase</keyword>
<reference key="1">
    <citation type="journal article" date="2003" name="Proc. Natl. Acad. Sci. U.S.A.">
        <title>The complete genome sequence of the Arabidopsis and tomato pathogen Pseudomonas syringae pv. tomato DC3000.</title>
        <authorList>
            <person name="Buell C.R."/>
            <person name="Joardar V."/>
            <person name="Lindeberg M."/>
            <person name="Selengut J."/>
            <person name="Paulsen I.T."/>
            <person name="Gwinn M.L."/>
            <person name="Dodson R.J."/>
            <person name="DeBoy R.T."/>
            <person name="Durkin A.S."/>
            <person name="Kolonay J.F."/>
            <person name="Madupu R."/>
            <person name="Daugherty S.C."/>
            <person name="Brinkac L.M."/>
            <person name="Beanan M.J."/>
            <person name="Haft D.H."/>
            <person name="Nelson W.C."/>
            <person name="Davidsen T.M."/>
            <person name="Zafar N."/>
            <person name="Zhou L."/>
            <person name="Liu J."/>
            <person name="Yuan Q."/>
            <person name="Khouri H.M."/>
            <person name="Fedorova N.B."/>
            <person name="Tran B."/>
            <person name="Russell D."/>
            <person name="Berry K.J."/>
            <person name="Utterback T.R."/>
            <person name="Van Aken S.E."/>
            <person name="Feldblyum T.V."/>
            <person name="D'Ascenzo M."/>
            <person name="Deng W.-L."/>
            <person name="Ramos A.R."/>
            <person name="Alfano J.R."/>
            <person name="Cartinhour S."/>
            <person name="Chatterjee A.K."/>
            <person name="Delaney T.P."/>
            <person name="Lazarowitz S.G."/>
            <person name="Martin G.B."/>
            <person name="Schneider D.J."/>
            <person name="Tang X."/>
            <person name="Bender C.L."/>
            <person name="White O."/>
            <person name="Fraser C.M."/>
            <person name="Collmer A."/>
        </authorList>
    </citation>
    <scope>NUCLEOTIDE SEQUENCE [LARGE SCALE GENOMIC DNA]</scope>
    <source>
        <strain>ATCC BAA-871 / DC3000</strain>
    </source>
</reference>
<evidence type="ECO:0000255" key="1">
    <source>
        <dbReference type="HAMAP-Rule" id="MF_00277"/>
    </source>
</evidence>
<evidence type="ECO:0000255" key="2">
    <source>
        <dbReference type="PROSITE-ProRule" id="PRU01175"/>
    </source>
</evidence>